<proteinExistence type="evidence at transcript level"/>
<accession>O74548</accession>
<accession>P78766</accession>
<organism>
    <name type="scientific">Schizosaccharomyces pombe (strain 972 / ATCC 24843)</name>
    <name type="common">Fission yeast</name>
    <dbReference type="NCBI Taxonomy" id="284812"/>
    <lineage>
        <taxon>Eukaryota</taxon>
        <taxon>Fungi</taxon>
        <taxon>Dikarya</taxon>
        <taxon>Ascomycota</taxon>
        <taxon>Taphrinomycotina</taxon>
        <taxon>Schizosaccharomycetes</taxon>
        <taxon>Schizosaccharomycetales</taxon>
        <taxon>Schizosaccharomycetaceae</taxon>
        <taxon>Schizosaccharomyces</taxon>
    </lineage>
</organism>
<feature type="transit peptide" description="Mitochondrion" evidence="2">
    <location>
        <begin position="1"/>
        <end status="unknown"/>
    </location>
</feature>
<feature type="chain" id="PRO_0000002081" description="Probable acetylornithine aminotransferase, mitochondrial">
    <location>
        <begin status="unknown"/>
        <end position="441"/>
    </location>
</feature>
<feature type="modified residue" description="N6-(pyridoxal phosphate)lysine" evidence="1">
    <location>
        <position position="294"/>
    </location>
</feature>
<feature type="sequence conflict" description="In Ref. 1; BAA13776." evidence="3" ref="1">
    <original>S</original>
    <variation>A</variation>
    <location>
        <position position="13"/>
    </location>
</feature>
<feature type="sequence conflict" description="In Ref. 1; BAA13776." evidence="3" ref="1">
    <original>A</original>
    <variation>D</variation>
    <location>
        <position position="152"/>
    </location>
</feature>
<feature type="sequence conflict" description="In Ref. 1; BAA13776." evidence="3" ref="1">
    <original>K</original>
    <variation>R</variation>
    <location>
        <position position="158"/>
    </location>
</feature>
<feature type="sequence conflict" description="In Ref. 1; BAA13776." evidence="3" ref="1">
    <original>G</original>
    <variation>E</variation>
    <location>
        <position position="303"/>
    </location>
</feature>
<keyword id="KW-0028">Amino-acid biosynthesis</keyword>
<keyword id="KW-0032">Aminotransferase</keyword>
<keyword id="KW-0055">Arginine biosynthesis</keyword>
<keyword id="KW-0496">Mitochondrion</keyword>
<keyword id="KW-0663">Pyridoxal phosphate</keyword>
<keyword id="KW-1185">Reference proteome</keyword>
<keyword id="KW-0808">Transferase</keyword>
<keyword id="KW-0809">Transit peptide</keyword>
<name>ARGD_SCHPO</name>
<comment type="catalytic activity">
    <reaction>
        <text>N(2)-acetyl-L-ornithine + 2-oxoglutarate = N-acetyl-L-glutamate 5-semialdehyde + L-glutamate</text>
        <dbReference type="Rhea" id="RHEA:18049"/>
        <dbReference type="ChEBI" id="CHEBI:16810"/>
        <dbReference type="ChEBI" id="CHEBI:29123"/>
        <dbReference type="ChEBI" id="CHEBI:29985"/>
        <dbReference type="ChEBI" id="CHEBI:57805"/>
        <dbReference type="EC" id="2.6.1.11"/>
    </reaction>
</comment>
<comment type="cofactor">
    <cofactor evidence="1">
        <name>pyridoxal 5'-phosphate</name>
        <dbReference type="ChEBI" id="CHEBI:597326"/>
    </cofactor>
</comment>
<comment type="pathway">
    <text>Amino-acid biosynthesis; L-arginine biosynthesis; N(2)-acetyl-L-ornithine from L-glutamate: step 4/4.</text>
</comment>
<comment type="subcellular location">
    <subcellularLocation>
        <location evidence="1">Mitochondrion matrix</location>
    </subcellularLocation>
</comment>
<comment type="similarity">
    <text evidence="3">Belongs to the class-III pyridoxal-phosphate-dependent aminotransferase family.</text>
</comment>
<comment type="sequence caution" evidence="3">
    <conflict type="frameshift">
        <sequence resource="EMBL-CDS" id="BAA13776"/>
    </conflict>
</comment>
<sequence>MFQRRSLLSVRSSGSQIAFRRFVSLTHKDPTPDTTSCNIIKKEGANIISVYARYPVVAAKGEGSYLFDKEGRKYIDFTSGVAVTSLGHAHPEVARLAADQCSKLVHSSNLFYNEPAIELSNVINNSLAKNSGIAGPTKIFFANCGTEANETALKFARKAAFEKYGEGKSQIVYFNNSFHGRSLGSLSITANPKYKRGFQPLLPDVVQAVYNDPASIEQFVNDKTAAVIVEPVQGEGGICPAKPEFLIALRKACDKVGASLIYDEIQCGLGRSGDLWAHSIVKDVASPDIITVAKPLANGLPIGATIVSSKIAAEIHPGEHGSTFGGNPVACRVGTFCVNELGSSKILQNVRKQHKALTSRFDDFVAKYPNLIRGYAGRGLLLGLQFTEPPAKFIELARQQGLLLLPGGNNNTRVLPSLNVKDEVIAKGLDIMESTLKALSK</sequence>
<dbReference type="EC" id="2.6.1.11"/>
<dbReference type="EMBL" id="D89114">
    <property type="protein sequence ID" value="BAA13776.1"/>
    <property type="status" value="ALT_FRAME"/>
    <property type="molecule type" value="mRNA"/>
</dbReference>
<dbReference type="EMBL" id="CU329672">
    <property type="protein sequence ID" value="CAA20713.1"/>
    <property type="molecule type" value="Genomic_DNA"/>
</dbReference>
<dbReference type="PIR" id="T11715">
    <property type="entry name" value="T11715"/>
</dbReference>
<dbReference type="PIR" id="T42091">
    <property type="entry name" value="T42091"/>
</dbReference>
<dbReference type="RefSeq" id="NP_588255.1">
    <property type="nucleotide sequence ID" value="NM_001023245.2"/>
</dbReference>
<dbReference type="SMR" id="O74548"/>
<dbReference type="BioGRID" id="275310">
    <property type="interactions" value="10"/>
</dbReference>
<dbReference type="FunCoup" id="O74548">
    <property type="interactions" value="176"/>
</dbReference>
<dbReference type="STRING" id="284812.O74548"/>
<dbReference type="iPTMnet" id="O74548"/>
<dbReference type="PaxDb" id="4896-SPCC777.09c.1"/>
<dbReference type="EnsemblFungi" id="SPCC777.09c.1">
    <property type="protein sequence ID" value="SPCC777.09c.1:pep"/>
    <property type="gene ID" value="SPCC777.09c"/>
</dbReference>
<dbReference type="GeneID" id="2538726"/>
<dbReference type="KEGG" id="spo:2538726"/>
<dbReference type="PomBase" id="SPCC777.09c">
    <property type="gene designation" value="arg1"/>
</dbReference>
<dbReference type="VEuPathDB" id="FungiDB:SPCC777.09c"/>
<dbReference type="eggNOG" id="KOG1401">
    <property type="taxonomic scope" value="Eukaryota"/>
</dbReference>
<dbReference type="HOGENOM" id="CLU_016922_10_1_1"/>
<dbReference type="InParanoid" id="O74548"/>
<dbReference type="OMA" id="MVPGFKY"/>
<dbReference type="PhylomeDB" id="O74548"/>
<dbReference type="UniPathway" id="UPA00068">
    <property type="reaction ID" value="UER00109"/>
</dbReference>
<dbReference type="PRO" id="PR:O74548"/>
<dbReference type="Proteomes" id="UP000002485">
    <property type="component" value="Chromosome III"/>
</dbReference>
<dbReference type="GO" id="GO:0005759">
    <property type="term" value="C:mitochondrial matrix"/>
    <property type="evidence" value="ECO:0000318"/>
    <property type="project" value="GO_Central"/>
</dbReference>
<dbReference type="GO" id="GO:0042802">
    <property type="term" value="F:identical protein binding"/>
    <property type="evidence" value="ECO:0000318"/>
    <property type="project" value="GO_Central"/>
</dbReference>
<dbReference type="GO" id="GO:0003992">
    <property type="term" value="F:N2-acetyl-L-ornithine:2-oxoglutarate 5-aminotransferase activity"/>
    <property type="evidence" value="ECO:0000250"/>
    <property type="project" value="PomBase"/>
</dbReference>
<dbReference type="GO" id="GO:0030170">
    <property type="term" value="F:pyridoxal phosphate binding"/>
    <property type="evidence" value="ECO:0000318"/>
    <property type="project" value="GO_Central"/>
</dbReference>
<dbReference type="GO" id="GO:0042450">
    <property type="term" value="P:arginine biosynthetic process via ornithine"/>
    <property type="evidence" value="ECO:0000315"/>
    <property type="project" value="PomBase"/>
</dbReference>
<dbReference type="GO" id="GO:0006526">
    <property type="term" value="P:L-arginine biosynthetic process"/>
    <property type="evidence" value="ECO:0000315"/>
    <property type="project" value="PomBase"/>
</dbReference>
<dbReference type="CDD" id="cd00610">
    <property type="entry name" value="OAT_like"/>
    <property type="match status" value="1"/>
</dbReference>
<dbReference type="FunFam" id="3.40.640.10:FF:000004">
    <property type="entry name" value="Acetylornithine aminotransferase"/>
    <property type="match status" value="1"/>
</dbReference>
<dbReference type="Gene3D" id="3.90.1150.10">
    <property type="entry name" value="Aspartate Aminotransferase, domain 1"/>
    <property type="match status" value="1"/>
</dbReference>
<dbReference type="Gene3D" id="3.40.640.10">
    <property type="entry name" value="Type I PLP-dependent aspartate aminotransferase-like (Major domain)"/>
    <property type="match status" value="1"/>
</dbReference>
<dbReference type="HAMAP" id="MF_01107">
    <property type="entry name" value="ArgD_aminotrans_3"/>
    <property type="match status" value="1"/>
</dbReference>
<dbReference type="InterPro" id="IPR004636">
    <property type="entry name" value="AcOrn/SuccOrn_fam"/>
</dbReference>
<dbReference type="InterPro" id="IPR005814">
    <property type="entry name" value="Aminotrans_3"/>
</dbReference>
<dbReference type="InterPro" id="IPR049704">
    <property type="entry name" value="Aminotrans_3_PPA_site"/>
</dbReference>
<dbReference type="InterPro" id="IPR050103">
    <property type="entry name" value="Class-III_PLP-dep_AT"/>
</dbReference>
<dbReference type="InterPro" id="IPR015424">
    <property type="entry name" value="PyrdxlP-dep_Trfase"/>
</dbReference>
<dbReference type="InterPro" id="IPR015421">
    <property type="entry name" value="PyrdxlP-dep_Trfase_major"/>
</dbReference>
<dbReference type="InterPro" id="IPR015422">
    <property type="entry name" value="PyrdxlP-dep_Trfase_small"/>
</dbReference>
<dbReference type="NCBIfam" id="TIGR00707">
    <property type="entry name" value="argD"/>
    <property type="match status" value="1"/>
</dbReference>
<dbReference type="NCBIfam" id="NF002325">
    <property type="entry name" value="PRK01278.1"/>
    <property type="match status" value="1"/>
</dbReference>
<dbReference type="PANTHER" id="PTHR11986:SF79">
    <property type="entry name" value="ACETYLORNITHINE AMINOTRANSFERASE, MITOCHONDRIAL"/>
    <property type="match status" value="1"/>
</dbReference>
<dbReference type="PANTHER" id="PTHR11986">
    <property type="entry name" value="AMINOTRANSFERASE CLASS III"/>
    <property type="match status" value="1"/>
</dbReference>
<dbReference type="Pfam" id="PF00202">
    <property type="entry name" value="Aminotran_3"/>
    <property type="match status" value="1"/>
</dbReference>
<dbReference type="PIRSF" id="PIRSF000521">
    <property type="entry name" value="Transaminase_4ab_Lys_Orn"/>
    <property type="match status" value="1"/>
</dbReference>
<dbReference type="SUPFAM" id="SSF53383">
    <property type="entry name" value="PLP-dependent transferases"/>
    <property type="match status" value="1"/>
</dbReference>
<dbReference type="PROSITE" id="PS00600">
    <property type="entry name" value="AA_TRANSFER_CLASS_3"/>
    <property type="match status" value="1"/>
</dbReference>
<gene>
    <name type="primary">arg1</name>
    <name type="ORF">SPCC777.09c</name>
</gene>
<evidence type="ECO:0000250" key="1"/>
<evidence type="ECO:0000255" key="2"/>
<evidence type="ECO:0000305" key="3"/>
<reference key="1">
    <citation type="journal article" date="1997" name="DNA Res.">
        <title>Identification of open reading frames in Schizosaccharomyces pombe cDNAs.</title>
        <authorList>
            <person name="Yoshioka S."/>
            <person name="Kato K."/>
            <person name="Nakai K."/>
            <person name="Okayama H."/>
            <person name="Nojima H."/>
        </authorList>
    </citation>
    <scope>NUCLEOTIDE SEQUENCE [LARGE SCALE MRNA]</scope>
    <source>
        <strain>PR745</strain>
    </source>
</reference>
<reference key="2">
    <citation type="journal article" date="2002" name="Nature">
        <title>The genome sequence of Schizosaccharomyces pombe.</title>
        <authorList>
            <person name="Wood V."/>
            <person name="Gwilliam R."/>
            <person name="Rajandream M.A."/>
            <person name="Lyne M.H."/>
            <person name="Lyne R."/>
            <person name="Stewart A."/>
            <person name="Sgouros J.G."/>
            <person name="Peat N."/>
            <person name="Hayles J."/>
            <person name="Baker S.G."/>
            <person name="Basham D."/>
            <person name="Bowman S."/>
            <person name="Brooks K."/>
            <person name="Brown D."/>
            <person name="Brown S."/>
            <person name="Chillingworth T."/>
            <person name="Churcher C.M."/>
            <person name="Collins M."/>
            <person name="Connor R."/>
            <person name="Cronin A."/>
            <person name="Davis P."/>
            <person name="Feltwell T."/>
            <person name="Fraser A."/>
            <person name="Gentles S."/>
            <person name="Goble A."/>
            <person name="Hamlin N."/>
            <person name="Harris D.E."/>
            <person name="Hidalgo J."/>
            <person name="Hodgson G."/>
            <person name="Holroyd S."/>
            <person name="Hornsby T."/>
            <person name="Howarth S."/>
            <person name="Huckle E.J."/>
            <person name="Hunt S."/>
            <person name="Jagels K."/>
            <person name="James K.D."/>
            <person name="Jones L."/>
            <person name="Jones M."/>
            <person name="Leather S."/>
            <person name="McDonald S."/>
            <person name="McLean J."/>
            <person name="Mooney P."/>
            <person name="Moule S."/>
            <person name="Mungall K.L."/>
            <person name="Murphy L.D."/>
            <person name="Niblett D."/>
            <person name="Odell C."/>
            <person name="Oliver K."/>
            <person name="O'Neil S."/>
            <person name="Pearson D."/>
            <person name="Quail M.A."/>
            <person name="Rabbinowitsch E."/>
            <person name="Rutherford K.M."/>
            <person name="Rutter S."/>
            <person name="Saunders D."/>
            <person name="Seeger K."/>
            <person name="Sharp S."/>
            <person name="Skelton J."/>
            <person name="Simmonds M.N."/>
            <person name="Squares R."/>
            <person name="Squares S."/>
            <person name="Stevens K."/>
            <person name="Taylor K."/>
            <person name="Taylor R.G."/>
            <person name="Tivey A."/>
            <person name="Walsh S.V."/>
            <person name="Warren T."/>
            <person name="Whitehead S."/>
            <person name="Woodward J.R."/>
            <person name="Volckaert G."/>
            <person name="Aert R."/>
            <person name="Robben J."/>
            <person name="Grymonprez B."/>
            <person name="Weltjens I."/>
            <person name="Vanstreels E."/>
            <person name="Rieger M."/>
            <person name="Schaefer M."/>
            <person name="Mueller-Auer S."/>
            <person name="Gabel C."/>
            <person name="Fuchs M."/>
            <person name="Duesterhoeft A."/>
            <person name="Fritzc C."/>
            <person name="Holzer E."/>
            <person name="Moestl D."/>
            <person name="Hilbert H."/>
            <person name="Borzym K."/>
            <person name="Langer I."/>
            <person name="Beck A."/>
            <person name="Lehrach H."/>
            <person name="Reinhardt R."/>
            <person name="Pohl T.M."/>
            <person name="Eger P."/>
            <person name="Zimmermann W."/>
            <person name="Wedler H."/>
            <person name="Wambutt R."/>
            <person name="Purnelle B."/>
            <person name="Goffeau A."/>
            <person name="Cadieu E."/>
            <person name="Dreano S."/>
            <person name="Gloux S."/>
            <person name="Lelaure V."/>
            <person name="Mottier S."/>
            <person name="Galibert F."/>
            <person name="Aves S.J."/>
            <person name="Xiang Z."/>
            <person name="Hunt C."/>
            <person name="Moore K."/>
            <person name="Hurst S.M."/>
            <person name="Lucas M."/>
            <person name="Rochet M."/>
            <person name="Gaillardin C."/>
            <person name="Tallada V.A."/>
            <person name="Garzon A."/>
            <person name="Thode G."/>
            <person name="Daga R.R."/>
            <person name="Cruzado L."/>
            <person name="Jimenez J."/>
            <person name="Sanchez M."/>
            <person name="del Rey F."/>
            <person name="Benito J."/>
            <person name="Dominguez A."/>
            <person name="Revuelta J.L."/>
            <person name="Moreno S."/>
            <person name="Armstrong J."/>
            <person name="Forsburg S.L."/>
            <person name="Cerutti L."/>
            <person name="Lowe T."/>
            <person name="McCombie W.R."/>
            <person name="Paulsen I."/>
            <person name="Potashkin J."/>
            <person name="Shpakovski G.V."/>
            <person name="Ussery D."/>
            <person name="Barrell B.G."/>
            <person name="Nurse P."/>
        </authorList>
    </citation>
    <scope>NUCLEOTIDE SEQUENCE [LARGE SCALE GENOMIC DNA]</scope>
    <source>
        <strain>972 / ATCC 24843</strain>
    </source>
</reference>
<protein>
    <recommendedName>
        <fullName>Probable acetylornithine aminotransferase, mitochondrial</fullName>
        <shortName>ACOAT</shortName>
        <ecNumber>2.6.1.11</ecNumber>
    </recommendedName>
</protein>